<organism>
    <name type="scientific">Capra hircus</name>
    <name type="common">Goat</name>
    <dbReference type="NCBI Taxonomy" id="9925"/>
    <lineage>
        <taxon>Eukaryota</taxon>
        <taxon>Metazoa</taxon>
        <taxon>Chordata</taxon>
        <taxon>Craniata</taxon>
        <taxon>Vertebrata</taxon>
        <taxon>Euteleostomi</taxon>
        <taxon>Mammalia</taxon>
        <taxon>Eutheria</taxon>
        <taxon>Laurasiatheria</taxon>
        <taxon>Artiodactyla</taxon>
        <taxon>Ruminantia</taxon>
        <taxon>Pecora</taxon>
        <taxon>Bovidae</taxon>
        <taxon>Caprinae</taxon>
        <taxon>Capra</taxon>
    </lineage>
</organism>
<dbReference type="EMBL" id="AB033604">
    <property type="protein sequence ID" value="BAA85389.1"/>
    <property type="molecule type" value="Genomic_DNA"/>
</dbReference>
<dbReference type="SMR" id="Q9TUG3"/>
<dbReference type="STRING" id="9925.ENSCHIP00000006847"/>
<dbReference type="Proteomes" id="UP000291000">
    <property type="component" value="Unassembled WGS sequence"/>
</dbReference>
<dbReference type="Proteomes" id="UP000694566">
    <property type="component" value="Unplaced"/>
</dbReference>
<dbReference type="GO" id="GO:0036128">
    <property type="term" value="C:CatSper complex"/>
    <property type="evidence" value="ECO:0000250"/>
    <property type="project" value="UniProtKB"/>
</dbReference>
<dbReference type="GO" id="GO:0005737">
    <property type="term" value="C:cytoplasm"/>
    <property type="evidence" value="ECO:0007669"/>
    <property type="project" value="UniProtKB-KW"/>
</dbReference>
<dbReference type="GO" id="GO:0072687">
    <property type="term" value="C:meiotic spindle"/>
    <property type="evidence" value="ECO:0000250"/>
    <property type="project" value="UniProtKB"/>
</dbReference>
<dbReference type="GO" id="GO:0005524">
    <property type="term" value="F:ATP binding"/>
    <property type="evidence" value="ECO:0007669"/>
    <property type="project" value="UniProtKB-KW"/>
</dbReference>
<dbReference type="GO" id="GO:0140662">
    <property type="term" value="F:ATP-dependent protein folding chaperone"/>
    <property type="evidence" value="ECO:0007669"/>
    <property type="project" value="InterPro"/>
</dbReference>
<dbReference type="GO" id="GO:0030154">
    <property type="term" value="P:cell differentiation"/>
    <property type="evidence" value="ECO:0007669"/>
    <property type="project" value="UniProtKB-KW"/>
</dbReference>
<dbReference type="GO" id="GO:0009409">
    <property type="term" value="P:response to cold"/>
    <property type="evidence" value="ECO:0000250"/>
    <property type="project" value="AgBase"/>
</dbReference>
<dbReference type="GO" id="GO:0009408">
    <property type="term" value="P:response to heat"/>
    <property type="evidence" value="ECO:0000250"/>
    <property type="project" value="AgBase"/>
</dbReference>
<dbReference type="GO" id="GO:0007283">
    <property type="term" value="P:spermatogenesis"/>
    <property type="evidence" value="ECO:0000250"/>
    <property type="project" value="UniProtKB"/>
</dbReference>
<dbReference type="CDD" id="cd10233">
    <property type="entry name" value="ASKHA_NBD_HSP70_HSPA1"/>
    <property type="match status" value="1"/>
</dbReference>
<dbReference type="FunFam" id="2.60.34.10:FF:000002">
    <property type="entry name" value="Heat shock 70 kDa"/>
    <property type="match status" value="1"/>
</dbReference>
<dbReference type="FunFam" id="3.30.420.40:FF:000172">
    <property type="entry name" value="Heat shock 70 kDa protein"/>
    <property type="match status" value="1"/>
</dbReference>
<dbReference type="FunFam" id="3.90.640.10:FF:000058">
    <property type="entry name" value="Heat shock 70 kDa protein"/>
    <property type="match status" value="1"/>
</dbReference>
<dbReference type="FunFam" id="1.20.1270.10:FF:000010">
    <property type="entry name" value="Heat shock 70 kDa protein 2"/>
    <property type="match status" value="1"/>
</dbReference>
<dbReference type="FunFam" id="3.30.30.30:FF:000001">
    <property type="entry name" value="heat shock 70 kDa protein-like"/>
    <property type="match status" value="1"/>
</dbReference>
<dbReference type="FunFam" id="3.30.420.40:FF:000135">
    <property type="entry name" value="Heat shock cognate 71 kDa protein"/>
    <property type="match status" value="1"/>
</dbReference>
<dbReference type="FunFam" id="3.30.420.40:FF:000026">
    <property type="entry name" value="Heat shock protein 70"/>
    <property type="match status" value="1"/>
</dbReference>
<dbReference type="Gene3D" id="1.20.1270.10">
    <property type="match status" value="1"/>
</dbReference>
<dbReference type="Gene3D" id="3.30.30.30">
    <property type="match status" value="1"/>
</dbReference>
<dbReference type="Gene3D" id="3.30.420.40">
    <property type="match status" value="2"/>
</dbReference>
<dbReference type="Gene3D" id="3.90.640.10">
    <property type="entry name" value="Actin, Chain A, domain 4"/>
    <property type="match status" value="1"/>
</dbReference>
<dbReference type="Gene3D" id="2.60.34.10">
    <property type="entry name" value="Substrate Binding Domain Of DNAk, Chain A, domain 1"/>
    <property type="match status" value="1"/>
</dbReference>
<dbReference type="InterPro" id="IPR043129">
    <property type="entry name" value="ATPase_NBD"/>
</dbReference>
<dbReference type="InterPro" id="IPR018181">
    <property type="entry name" value="Heat_shock_70_CS"/>
</dbReference>
<dbReference type="InterPro" id="IPR029048">
    <property type="entry name" value="HSP70_C_sf"/>
</dbReference>
<dbReference type="InterPro" id="IPR029047">
    <property type="entry name" value="HSP70_peptide-bd_sf"/>
</dbReference>
<dbReference type="InterPro" id="IPR013126">
    <property type="entry name" value="Hsp_70_fam"/>
</dbReference>
<dbReference type="NCBIfam" id="NF001413">
    <property type="entry name" value="PRK00290.1"/>
    <property type="match status" value="1"/>
</dbReference>
<dbReference type="PANTHER" id="PTHR19375">
    <property type="entry name" value="HEAT SHOCK PROTEIN 70KDA"/>
    <property type="match status" value="1"/>
</dbReference>
<dbReference type="Pfam" id="PF00012">
    <property type="entry name" value="HSP70"/>
    <property type="match status" value="1"/>
</dbReference>
<dbReference type="PRINTS" id="PR00301">
    <property type="entry name" value="HEATSHOCK70"/>
</dbReference>
<dbReference type="SUPFAM" id="SSF53067">
    <property type="entry name" value="Actin-like ATPase domain"/>
    <property type="match status" value="2"/>
</dbReference>
<dbReference type="SUPFAM" id="SSF100934">
    <property type="entry name" value="Heat shock protein 70kD (HSP70), C-terminal subdomain"/>
    <property type="match status" value="1"/>
</dbReference>
<dbReference type="SUPFAM" id="SSF100920">
    <property type="entry name" value="Heat shock protein 70kD (HSP70), peptide-binding domain"/>
    <property type="match status" value="1"/>
</dbReference>
<dbReference type="PROSITE" id="PS00297">
    <property type="entry name" value="HSP70_1"/>
    <property type="match status" value="1"/>
</dbReference>
<dbReference type="PROSITE" id="PS00329">
    <property type="entry name" value="HSP70_2"/>
    <property type="match status" value="1"/>
</dbReference>
<dbReference type="PROSITE" id="PS01036">
    <property type="entry name" value="HSP70_3"/>
    <property type="match status" value="1"/>
</dbReference>
<gene>
    <name type="primary">HSPA2</name>
    <name type="synonym">HSP70-3</name>
</gene>
<sequence length="636" mass="69867">MSARGPAIGIDLGTTYSCVGVFQHGKVEIIANDQGNRTTPSYVAFTDTERLIGDAAKNQVAMNPTNTIFDAKRLIGRKFEDATVQSDMKHWPFRVVSEGGKPKVQVEYKGEIKTFFPEEISSMVLTKMKEIAEAYLGGKVQSAVITVPAYFNDSQRQATKDAGTITGLNVLRIINEPTAAAIAYGLDKKGCAGGEKNVLIFDLGGGTFDVSILTIEDGIFEVKSTAGDTHLGGEDFDNRMVSHLAEEFKRKHKKDIAPNKRAVRRLRTACERAKRTLSSSTQASIEIDSLYEGVDFYTSITRARFEELNADLFRVTLEPVEKALRDAKLDKGQIQEIVLVGGSTRIPKIQKLLQDFFNGKELNKSINPDEAVAYGAAVQAAILIGDKSENVQDLLLLDVTPLSLGIETAGGVMTPLIKRNTTIPTKQTQTFTTYSDNQSSVLVQVYEGERAMTKDNNLLGKFDLTGIPPAPRGVPQIEVTFDIDANGILNVTAADKSTGKENKITITNDKGRLSKDDIDRMVQEAERYKSEDEANRDRVAAKNAVESYTYNIKQTVEDEKLRGKISDQDKNKILDKCQEVINWLDRNQMAEKDEYEHKQKELERVCNPIISKLYQGGPGGGGGSGSSGGPTIEEVD</sequence>
<accession>Q9TUG3</accession>
<reference key="1">
    <citation type="submission" date="1999-10" db="EMBL/GenBank/DDBJ databases">
        <title>Capra hircus 70kDa heat shock protein-3 (HSP70-3) gene.</title>
        <authorList>
            <person name="Luengrattana Y."/>
            <person name="Hanzawa K."/>
            <person name="Watanabe S."/>
            <person name="Hara H."/>
        </authorList>
    </citation>
    <scope>NUCLEOTIDE SEQUENCE [GENOMIC DNA]</scope>
</reference>
<keyword id="KW-0067">ATP-binding</keyword>
<keyword id="KW-0143">Chaperone</keyword>
<keyword id="KW-0963">Cytoplasm</keyword>
<keyword id="KW-0206">Cytoskeleton</keyword>
<keyword id="KW-0221">Differentiation</keyword>
<keyword id="KW-0488">Methylation</keyword>
<keyword id="KW-0547">Nucleotide-binding</keyword>
<keyword id="KW-0597">Phosphoprotein</keyword>
<keyword id="KW-1185">Reference proteome</keyword>
<keyword id="KW-0744">Spermatogenesis</keyword>
<keyword id="KW-0346">Stress response</keyword>
<proteinExistence type="inferred from homology"/>
<protein>
    <recommendedName>
        <fullName>Heat shock-related 70 kDa protein 2</fullName>
    </recommendedName>
    <alternativeName>
        <fullName>Heat shock 70 kDa protein 3</fullName>
        <shortName>HSP70.3</shortName>
    </alternativeName>
</protein>
<name>HSP72_CAPHI</name>
<comment type="function">
    <text evidence="4 5">Molecular chaperone implicated in a wide variety of cellular processes, including protection of the proteome from stress, folding and transport of newly synthesized polypeptides, activation of proteolysis of misfolded proteins and the formation and dissociation of protein complexes. Plays a pivotal role in the protein quality control system, ensuring the correct folding of proteins, the re-folding of misfolded proteins and controlling the targeting of proteins for subsequent degradation. This is achieved through cycles of ATP binding, ATP hydrolysis and ADP release, mediated by co-chaperones. In the ATP-bound form, it has a low affinity for substrate proteins. However, upon hydrolysis of the ATP to ADP, it undergoes a conformational change that increases its affinity for substrate proteins. It goes through repeated cycles of ATP hydrolysis and nucleotide exchange, which permits cycles of substrate binding and release. Plays a role in spermatogenesis. In association with SHCBP1L may participate in the maintenance of spindle integrity during meiosis in male germ cells.</text>
</comment>
<comment type="subunit">
    <text evidence="4 5">Interacts with FKBP6. Interacts with ZNF541. Component of the CatSper complex. Interacts with RABL2/RABL2A; binds preferentially to GTP-bound RABL2. Interacts with SHCBP1L; this interaction may promote the recruitment of HSPA2 to the spindle. Interacts with MOV10L1.</text>
</comment>
<comment type="subcellular location">
    <subcellularLocation>
        <location evidence="4">Cytoplasm</location>
        <location evidence="4">Cytoskeleton</location>
        <location evidence="4">Spindle</location>
    </subcellularLocation>
    <text evidence="4">Colocalizes with SHCBP1L at spindle during the meiosis process.</text>
</comment>
<comment type="domain">
    <text evidence="5">The N-terminal nucleotide binding domain (NBD) (also known as the ATPase domain) is responsible for binding and hydrolyzing ATP. The C-terminal substrate-binding domain (SBD) (also known as peptide-binding domain) binds to the client/substrate proteins. The two domains are allosterically coupled so that, when ATP is bound to the NBD, the SBD binds relatively weakly to clients. When ADP is bound in the NBD, a conformational change enhances the affinity of the SBD for client proteins.</text>
</comment>
<comment type="similarity">
    <text evidence="7">Belongs to the heat shock protein 70 family.</text>
</comment>
<feature type="chain" id="PRO_0000289984" description="Heat shock-related 70 kDa protein 2">
    <location>
        <begin position="1"/>
        <end position="636"/>
    </location>
</feature>
<feature type="region of interest" description="Nucleotide-binding domain (NBD)" evidence="2">
    <location>
        <begin position="2"/>
        <end position="389"/>
    </location>
</feature>
<feature type="region of interest" description="Substrate-binding domain (SBD)" evidence="2">
    <location>
        <begin position="397"/>
        <end position="512"/>
    </location>
</feature>
<feature type="region of interest" description="Disordered" evidence="6">
    <location>
        <begin position="613"/>
        <end position="636"/>
    </location>
</feature>
<feature type="compositionally biased region" description="Gly residues" evidence="6">
    <location>
        <begin position="616"/>
        <end position="628"/>
    </location>
</feature>
<feature type="binding site" evidence="1">
    <location>
        <begin position="13"/>
        <end position="16"/>
    </location>
    <ligand>
        <name>ATP</name>
        <dbReference type="ChEBI" id="CHEBI:30616"/>
    </ligand>
</feature>
<feature type="binding site" evidence="1">
    <location>
        <position position="72"/>
    </location>
    <ligand>
        <name>ATP</name>
        <dbReference type="ChEBI" id="CHEBI:30616"/>
    </ligand>
</feature>
<feature type="binding site" evidence="1">
    <location>
        <begin position="205"/>
        <end position="207"/>
    </location>
    <ligand>
        <name>ATP</name>
        <dbReference type="ChEBI" id="CHEBI:30616"/>
    </ligand>
</feature>
<feature type="binding site" evidence="1">
    <location>
        <begin position="271"/>
        <end position="278"/>
    </location>
    <ligand>
        <name>ATP</name>
        <dbReference type="ChEBI" id="CHEBI:30616"/>
    </ligand>
</feature>
<feature type="binding site" evidence="1">
    <location>
        <begin position="342"/>
        <end position="345"/>
    </location>
    <ligand>
        <name>ATP</name>
        <dbReference type="ChEBI" id="CHEBI:30616"/>
    </ligand>
</feature>
<feature type="modified residue" description="Phosphoserine" evidence="3">
    <location>
        <position position="403"/>
    </location>
</feature>
<feature type="modified residue" description="Phosphothreonine" evidence="3">
    <location>
        <position position="408"/>
    </location>
</feature>
<feature type="modified residue" description="Phosphothreonine" evidence="3">
    <location>
        <position position="414"/>
    </location>
</feature>
<feature type="modified residue" description="N6,N6,N6-trimethyllysine; by METTL21A; in vitro" evidence="5">
    <location>
        <position position="564"/>
    </location>
</feature>
<evidence type="ECO:0000250" key="1"/>
<evidence type="ECO:0000250" key="2">
    <source>
        <dbReference type="UniProtKB" id="P11142"/>
    </source>
</evidence>
<evidence type="ECO:0000250" key="3">
    <source>
        <dbReference type="UniProtKB" id="P14659"/>
    </source>
</evidence>
<evidence type="ECO:0000250" key="4">
    <source>
        <dbReference type="UniProtKB" id="P17156"/>
    </source>
</evidence>
<evidence type="ECO:0000250" key="5">
    <source>
        <dbReference type="UniProtKB" id="P54652"/>
    </source>
</evidence>
<evidence type="ECO:0000256" key="6">
    <source>
        <dbReference type="SAM" id="MobiDB-lite"/>
    </source>
</evidence>
<evidence type="ECO:0000305" key="7"/>